<reference key="1">
    <citation type="journal article" date="2009" name="J. Bacteriol.">
        <title>Complete genome sequence of Rhodobacter sphaeroides KD131.</title>
        <authorList>
            <person name="Lim S.-K."/>
            <person name="Kim S.J."/>
            <person name="Cha S.H."/>
            <person name="Oh Y.-K."/>
            <person name="Rhee H.-J."/>
            <person name="Kim M.-S."/>
            <person name="Lee J.K."/>
        </authorList>
    </citation>
    <scope>NUCLEOTIDE SEQUENCE [LARGE SCALE GENOMIC DNA]</scope>
    <source>
        <strain>KD131 / KCTC 12085</strain>
    </source>
</reference>
<comment type="similarity">
    <text evidence="1">Belongs to the UPF0262 family.</text>
</comment>
<accession>B9KL48</accession>
<feature type="chain" id="PRO_1000147710" description="UPF0262 protein RSKD131_1985">
    <location>
        <begin position="1"/>
        <end position="158"/>
    </location>
</feature>
<proteinExistence type="inferred from homology"/>
<sequence length="158" mass="18153">MNRICHIEIDQTSPIPPTAEIEQERQVAIFDLLEENSFALPAREGRAPAEGPFRLTLAIREGRLVFDIRSEEEEKVGEFHLSLGPFRQVVKDYFHICESYFEAVKRLPPSQIEAIDMARRGIHNEGARVLKERLEGKAEVDIDTARRLFTLICVLHWG</sequence>
<gene>
    <name type="ordered locus">RSKD131_1985</name>
</gene>
<protein>
    <recommendedName>
        <fullName evidence="1">UPF0262 protein RSKD131_1985</fullName>
    </recommendedName>
</protein>
<dbReference type="EMBL" id="CP001150">
    <property type="protein sequence ID" value="ACM01845.1"/>
    <property type="molecule type" value="Genomic_DNA"/>
</dbReference>
<dbReference type="RefSeq" id="WP_015921112.1">
    <property type="nucleotide sequence ID" value="NC_011963.1"/>
</dbReference>
<dbReference type="SMR" id="B9KL48"/>
<dbReference type="GeneID" id="67447377"/>
<dbReference type="KEGG" id="rsk:RSKD131_1985"/>
<dbReference type="HOGENOM" id="CLU_112904_0_0_5"/>
<dbReference type="HAMAP" id="MF_00678">
    <property type="entry name" value="UPF0262"/>
    <property type="match status" value="1"/>
</dbReference>
<dbReference type="InterPro" id="IPR008321">
    <property type="entry name" value="UCP032146"/>
</dbReference>
<dbReference type="NCBIfam" id="NF002769">
    <property type="entry name" value="PRK02853.1"/>
    <property type="match status" value="1"/>
</dbReference>
<dbReference type="Pfam" id="PF06793">
    <property type="entry name" value="UPF0262"/>
    <property type="match status" value="1"/>
</dbReference>
<dbReference type="PIRSF" id="PIRSF032146">
    <property type="entry name" value="UCP032146"/>
    <property type="match status" value="1"/>
</dbReference>
<evidence type="ECO:0000255" key="1">
    <source>
        <dbReference type="HAMAP-Rule" id="MF_00678"/>
    </source>
</evidence>
<organism>
    <name type="scientific">Cereibacter sphaeroides (strain KD131 / KCTC 12085)</name>
    <name type="common">Rhodobacter sphaeroides</name>
    <dbReference type="NCBI Taxonomy" id="557760"/>
    <lineage>
        <taxon>Bacteria</taxon>
        <taxon>Pseudomonadati</taxon>
        <taxon>Pseudomonadota</taxon>
        <taxon>Alphaproteobacteria</taxon>
        <taxon>Rhodobacterales</taxon>
        <taxon>Paracoccaceae</taxon>
        <taxon>Cereibacter</taxon>
    </lineage>
</organism>
<name>Y1985_CERSK</name>